<feature type="chain" id="PRO_0000241526" description="Elongation factor Ts">
    <location>
        <begin position="1"/>
        <end position="283"/>
    </location>
</feature>
<feature type="region of interest" description="Involved in Mg(2+) ion dislocation from EF-Tu" evidence="1">
    <location>
        <begin position="80"/>
        <end position="83"/>
    </location>
</feature>
<organism>
    <name type="scientific">Salmonella paratyphi A (strain ATCC 9150 / SARB42)</name>
    <dbReference type="NCBI Taxonomy" id="295319"/>
    <lineage>
        <taxon>Bacteria</taxon>
        <taxon>Pseudomonadati</taxon>
        <taxon>Pseudomonadota</taxon>
        <taxon>Gammaproteobacteria</taxon>
        <taxon>Enterobacterales</taxon>
        <taxon>Enterobacteriaceae</taxon>
        <taxon>Salmonella</taxon>
    </lineage>
</organism>
<name>EFTS_SALPA</name>
<protein>
    <recommendedName>
        <fullName evidence="1">Elongation factor Ts</fullName>
        <shortName evidence="1">EF-Ts</shortName>
    </recommendedName>
</protein>
<accession>Q5PD62</accession>
<keyword id="KW-0963">Cytoplasm</keyword>
<keyword id="KW-0251">Elongation factor</keyword>
<keyword id="KW-0648">Protein biosynthesis</keyword>
<evidence type="ECO:0000255" key="1">
    <source>
        <dbReference type="HAMAP-Rule" id="MF_00050"/>
    </source>
</evidence>
<sequence>MAEITASLVKELRERTGAGMMDCKKALTEANGDIELAIENMRKSGAIKAAKKAGNVAADGVIKTKIDGNVAFILEVNCQTDFVAKDAGFQAFADKVLDAAVAGKITDVEVLKAQFEEERVALVAKIGENINIRRVASLEGDVLGSYQHGARIGVLVAAKGADEELVKQLAMHVAASKPEFVKPEDVSVDVVEKEYQVQLDIAMQSGKPKEIAEKMVEGRMKKFTGEVSLTGQPFVMEPSKSVGQLLKEHNADVTGFIRFEVGEGIEKVETDFAAEVAAMSKQS</sequence>
<reference key="1">
    <citation type="journal article" date="2004" name="Nat. Genet.">
        <title>Comparison of genome degradation in Paratyphi A and Typhi, human-restricted serovars of Salmonella enterica that cause typhoid.</title>
        <authorList>
            <person name="McClelland M."/>
            <person name="Sanderson K.E."/>
            <person name="Clifton S.W."/>
            <person name="Latreille P."/>
            <person name="Porwollik S."/>
            <person name="Sabo A."/>
            <person name="Meyer R."/>
            <person name="Bieri T."/>
            <person name="Ozersky P."/>
            <person name="McLellan M."/>
            <person name="Harkins C.R."/>
            <person name="Wang C."/>
            <person name="Nguyen C."/>
            <person name="Berghoff A."/>
            <person name="Elliott G."/>
            <person name="Kohlberg S."/>
            <person name="Strong C."/>
            <person name="Du F."/>
            <person name="Carter J."/>
            <person name="Kremizki C."/>
            <person name="Layman D."/>
            <person name="Leonard S."/>
            <person name="Sun H."/>
            <person name="Fulton L."/>
            <person name="Nash W."/>
            <person name="Miner T."/>
            <person name="Minx P."/>
            <person name="Delehaunty K."/>
            <person name="Fronick C."/>
            <person name="Magrini V."/>
            <person name="Nhan M."/>
            <person name="Warren W."/>
            <person name="Florea L."/>
            <person name="Spieth J."/>
            <person name="Wilson R.K."/>
        </authorList>
    </citation>
    <scope>NUCLEOTIDE SEQUENCE [LARGE SCALE GENOMIC DNA]</scope>
    <source>
        <strain>ATCC 9150 / SARB42</strain>
    </source>
</reference>
<comment type="function">
    <text evidence="1">Associates with the EF-Tu.GDP complex and induces the exchange of GDP to GTP. It remains bound to the aminoacyl-tRNA.EF-Tu.GTP complex up to the GTP hydrolysis stage on the ribosome.</text>
</comment>
<comment type="subcellular location">
    <subcellularLocation>
        <location evidence="1">Cytoplasm</location>
    </subcellularLocation>
</comment>
<comment type="similarity">
    <text evidence="1">Belongs to the EF-Ts family.</text>
</comment>
<proteinExistence type="inferred from homology"/>
<dbReference type="EMBL" id="CP000026">
    <property type="protein sequence ID" value="AAV76253.1"/>
    <property type="molecule type" value="Genomic_DNA"/>
</dbReference>
<dbReference type="RefSeq" id="WP_000808107.1">
    <property type="nucleotide sequence ID" value="NC_006511.1"/>
</dbReference>
<dbReference type="SMR" id="Q5PD62"/>
<dbReference type="KEGG" id="spt:SPA0224"/>
<dbReference type="HOGENOM" id="CLU_047155_0_2_6"/>
<dbReference type="Proteomes" id="UP000008185">
    <property type="component" value="Chromosome"/>
</dbReference>
<dbReference type="GO" id="GO:0005737">
    <property type="term" value="C:cytoplasm"/>
    <property type="evidence" value="ECO:0007669"/>
    <property type="project" value="UniProtKB-SubCell"/>
</dbReference>
<dbReference type="GO" id="GO:0003746">
    <property type="term" value="F:translation elongation factor activity"/>
    <property type="evidence" value="ECO:0007669"/>
    <property type="project" value="UniProtKB-UniRule"/>
</dbReference>
<dbReference type="CDD" id="cd14275">
    <property type="entry name" value="UBA_EF-Ts"/>
    <property type="match status" value="1"/>
</dbReference>
<dbReference type="FunFam" id="1.10.286.20:FF:000001">
    <property type="entry name" value="Elongation factor Ts"/>
    <property type="match status" value="1"/>
</dbReference>
<dbReference type="FunFam" id="1.10.8.10:FF:000001">
    <property type="entry name" value="Elongation factor Ts"/>
    <property type="match status" value="1"/>
</dbReference>
<dbReference type="FunFam" id="3.30.479.20:FF:000001">
    <property type="entry name" value="Elongation factor Ts"/>
    <property type="match status" value="1"/>
</dbReference>
<dbReference type="Gene3D" id="1.10.286.20">
    <property type="match status" value="1"/>
</dbReference>
<dbReference type="Gene3D" id="1.10.8.10">
    <property type="entry name" value="DNA helicase RuvA subunit, C-terminal domain"/>
    <property type="match status" value="1"/>
</dbReference>
<dbReference type="Gene3D" id="3.30.479.20">
    <property type="entry name" value="Elongation factor Ts, dimerisation domain"/>
    <property type="match status" value="2"/>
</dbReference>
<dbReference type="HAMAP" id="MF_00050">
    <property type="entry name" value="EF_Ts"/>
    <property type="match status" value="1"/>
</dbReference>
<dbReference type="InterPro" id="IPR036402">
    <property type="entry name" value="EF-Ts_dimer_sf"/>
</dbReference>
<dbReference type="InterPro" id="IPR001816">
    <property type="entry name" value="Transl_elong_EFTs/EF1B"/>
</dbReference>
<dbReference type="InterPro" id="IPR014039">
    <property type="entry name" value="Transl_elong_EFTs/EF1B_dimer"/>
</dbReference>
<dbReference type="InterPro" id="IPR018101">
    <property type="entry name" value="Transl_elong_Ts_CS"/>
</dbReference>
<dbReference type="InterPro" id="IPR009060">
    <property type="entry name" value="UBA-like_sf"/>
</dbReference>
<dbReference type="NCBIfam" id="TIGR00116">
    <property type="entry name" value="tsf"/>
    <property type="match status" value="1"/>
</dbReference>
<dbReference type="PANTHER" id="PTHR11741">
    <property type="entry name" value="ELONGATION FACTOR TS"/>
    <property type="match status" value="1"/>
</dbReference>
<dbReference type="PANTHER" id="PTHR11741:SF0">
    <property type="entry name" value="ELONGATION FACTOR TS, MITOCHONDRIAL"/>
    <property type="match status" value="1"/>
</dbReference>
<dbReference type="Pfam" id="PF00889">
    <property type="entry name" value="EF_TS"/>
    <property type="match status" value="1"/>
</dbReference>
<dbReference type="SUPFAM" id="SSF54713">
    <property type="entry name" value="Elongation factor Ts (EF-Ts), dimerisation domain"/>
    <property type="match status" value="2"/>
</dbReference>
<dbReference type="SUPFAM" id="SSF46934">
    <property type="entry name" value="UBA-like"/>
    <property type="match status" value="1"/>
</dbReference>
<dbReference type="PROSITE" id="PS01126">
    <property type="entry name" value="EF_TS_1"/>
    <property type="match status" value="1"/>
</dbReference>
<dbReference type="PROSITE" id="PS01127">
    <property type="entry name" value="EF_TS_2"/>
    <property type="match status" value="1"/>
</dbReference>
<gene>
    <name evidence="1" type="primary">tsf</name>
    <name type="ordered locus">SPA0224</name>
</gene>